<protein>
    <recommendedName>
        <fullName evidence="3">U1-poneritoxin-Da1a</fullName>
        <shortName evidence="3">U1-PONTX-Da1a</shortName>
    </recommendedName>
    <alternativeName>
        <fullName evidence="2">Dinoponeratoxin Da-1039</fullName>
    </alternativeName>
    <alternativeName>
        <fullName evidence="4">Poneratoxin</fullName>
    </alternativeName>
</protein>
<evidence type="ECO:0000269" key="1">
    <source>
    </source>
</evidence>
<evidence type="ECO:0000303" key="2">
    <source>
    </source>
</evidence>
<evidence type="ECO:0000303" key="3">
    <source>
    </source>
</evidence>
<evidence type="ECO:0000305" key="4"/>
<evidence type="ECO:0000305" key="5">
    <source>
    </source>
</evidence>
<accession>P0CF04</accession>
<name>TX1A_DINAS</name>
<proteinExistence type="evidence at protein level"/>
<comment type="function">
    <text evidence="4">May have antimicrobial properties, like most ant linear peptides.</text>
</comment>
<comment type="subcellular location">
    <subcellularLocation>
        <location evidence="1">Secreted</location>
    </subcellularLocation>
</comment>
<comment type="tissue specificity">
    <text evidence="5">Expressed by the venom gland.</text>
</comment>
<comment type="mass spectrometry" mass="1038.5" method="Electrospray" evidence="1"/>
<keyword id="KW-0929">Antimicrobial</keyword>
<keyword id="KW-0903">Direct protein sequencing</keyword>
<keyword id="KW-0964">Secreted</keyword>
<dbReference type="GO" id="GO:0005576">
    <property type="term" value="C:extracellular region"/>
    <property type="evidence" value="ECO:0007669"/>
    <property type="project" value="UniProtKB-SubCell"/>
</dbReference>
<reference key="1">
    <citation type="journal article" date="2010" name="Toxicon">
        <title>A biochemical characterization of the major peptides from the venom of the giant Neotropical hunting ant Dinoponera australis.</title>
        <authorList>
            <person name="Johnson S.R."/>
            <person name="Copello J.A."/>
            <person name="Evans M.S."/>
            <person name="Suarez A.V."/>
        </authorList>
    </citation>
    <scope>PROTEIN SEQUENCE</scope>
    <scope>MASS SPECTROMETRY</scope>
    <scope>SYNTHESIS</scope>
    <scope>SUBCELLULAR LOCATION</scope>
    <source>
        <tissue>Venom</tissue>
    </source>
</reference>
<reference key="2">
    <citation type="journal article" date="2016" name="Toxins">
        <title>The biochemical toxin arsenal from ant venoms.</title>
        <authorList>
            <person name="Touchard A."/>
            <person name="Aili S.R."/>
            <person name="Fox E.G."/>
            <person name="Escoubas P."/>
            <person name="Orivel J."/>
            <person name="Nicholson G.M."/>
            <person name="Dejean A."/>
        </authorList>
    </citation>
    <scope>REVIEW</scope>
    <scope>NOMENCLATURE</scope>
</reference>
<sequence length="9" mass="1039">GVVPHDFRI</sequence>
<organism>
    <name type="scientific">Dinoponera australis</name>
    <name type="common">Giant neotropical hunting ant</name>
    <dbReference type="NCBI Taxonomy" id="609289"/>
    <lineage>
        <taxon>Eukaryota</taxon>
        <taxon>Metazoa</taxon>
        <taxon>Ecdysozoa</taxon>
        <taxon>Arthropoda</taxon>
        <taxon>Hexapoda</taxon>
        <taxon>Insecta</taxon>
        <taxon>Pterygota</taxon>
        <taxon>Neoptera</taxon>
        <taxon>Endopterygota</taxon>
        <taxon>Hymenoptera</taxon>
        <taxon>Apocrita</taxon>
        <taxon>Aculeata</taxon>
        <taxon>Formicoidea</taxon>
        <taxon>Formicidae</taxon>
        <taxon>Ponerinae</taxon>
        <taxon>Ponerini</taxon>
        <taxon>Dinoponera</taxon>
    </lineage>
</organism>
<feature type="peptide" id="PRO_0000393348" description="U1-poneritoxin-Da1a" evidence="1">
    <location>
        <begin position="1"/>
        <end position="9"/>
    </location>
</feature>